<gene>
    <name type="primary">DEFB115</name>
    <name type="synonym">DEFB15</name>
</gene>
<comment type="function">
    <text evidence="1">Has antibacterial activity.</text>
</comment>
<comment type="interaction">
    <interactant intactId="EBI-12253292">
        <id>Q30KQ5</id>
    </interactant>
    <interactant intactId="EBI-741480">
        <id>Q9UMX0</id>
        <label>UBQLN1</label>
    </interactant>
    <organismsDiffer>false</organismsDiffer>
    <experiments>3</experiments>
</comment>
<comment type="interaction">
    <interactant intactId="EBI-12253292">
        <id>Q30KQ5</id>
    </interactant>
    <interactant intactId="EBI-947187">
        <id>Q9UHD9</id>
        <label>UBQLN2</label>
    </interactant>
    <organismsDiffer>false</organismsDiffer>
    <experiments>3</experiments>
</comment>
<comment type="subcellular location">
    <subcellularLocation>
        <location evidence="1">Secreted</location>
    </subcellularLocation>
</comment>
<comment type="similarity">
    <text evidence="3">Belongs to the beta-defensin family.</text>
</comment>
<accession>Q30KQ5</accession>
<protein>
    <recommendedName>
        <fullName>Beta-defensin 115</fullName>
    </recommendedName>
    <alternativeName>
        <fullName>Beta-defensin 15</fullName>
        <shortName>DEFB-15</shortName>
    </alternativeName>
    <alternativeName>
        <fullName>Defensin, beta 115</fullName>
    </alternativeName>
</protein>
<name>DB115_HUMAN</name>
<feature type="signal peptide" evidence="2">
    <location>
        <begin position="1"/>
        <end position="27"/>
    </location>
</feature>
<feature type="chain" id="PRO_0000045343" description="Beta-defensin 115">
    <location>
        <begin position="28"/>
        <end position="88"/>
    </location>
</feature>
<feature type="disulfide bond" evidence="1">
    <location>
        <begin position="38"/>
        <end position="65"/>
    </location>
</feature>
<feature type="disulfide bond" evidence="1">
    <location>
        <begin position="45"/>
        <end position="59"/>
    </location>
</feature>
<feature type="disulfide bond" evidence="1">
    <location>
        <begin position="49"/>
        <end position="66"/>
    </location>
</feature>
<organism>
    <name type="scientific">Homo sapiens</name>
    <name type="common">Human</name>
    <dbReference type="NCBI Taxonomy" id="9606"/>
    <lineage>
        <taxon>Eukaryota</taxon>
        <taxon>Metazoa</taxon>
        <taxon>Chordata</taxon>
        <taxon>Craniata</taxon>
        <taxon>Vertebrata</taxon>
        <taxon>Euteleostomi</taxon>
        <taxon>Mammalia</taxon>
        <taxon>Eutheria</taxon>
        <taxon>Euarchontoglires</taxon>
        <taxon>Primates</taxon>
        <taxon>Haplorrhini</taxon>
        <taxon>Catarrhini</taxon>
        <taxon>Hominidae</taxon>
        <taxon>Homo</taxon>
    </lineage>
</organism>
<keyword id="KW-0044">Antibiotic</keyword>
<keyword id="KW-0929">Antimicrobial</keyword>
<keyword id="KW-0211">Defensin</keyword>
<keyword id="KW-1015">Disulfide bond</keyword>
<keyword id="KW-1185">Reference proteome</keyword>
<keyword id="KW-0964">Secreted</keyword>
<keyword id="KW-0732">Signal</keyword>
<sequence>MLPDHFSPLSGDIKLSVLALVVLVVLAQTAPDGWIRRCYYGTGRCRKSCKEIERKKEKCGEKHICCVPKEKDKLSHIHDQKETSELYI</sequence>
<proteinExistence type="evidence at protein level"/>
<evidence type="ECO:0000250" key="1"/>
<evidence type="ECO:0000255" key="2"/>
<evidence type="ECO:0000305" key="3"/>
<dbReference type="EMBL" id="DQ012019">
    <property type="protein sequence ID" value="AAY59755.1"/>
    <property type="molecule type" value="mRNA"/>
</dbReference>
<dbReference type="EMBL" id="AL121723">
    <property type="status" value="NOT_ANNOTATED_CDS"/>
    <property type="molecule type" value="Genomic_DNA"/>
</dbReference>
<dbReference type="CCDS" id="CCDS42859.1"/>
<dbReference type="RefSeq" id="NP_001032819.1">
    <property type="nucleotide sequence ID" value="NM_001037730.1"/>
</dbReference>
<dbReference type="SMR" id="Q30KQ5"/>
<dbReference type="BioGRID" id="128843">
    <property type="interactions" value="4"/>
</dbReference>
<dbReference type="IntAct" id="Q30KQ5">
    <property type="interactions" value="2"/>
</dbReference>
<dbReference type="STRING" id="9606.ENSP00000383398"/>
<dbReference type="iPTMnet" id="Q30KQ5"/>
<dbReference type="PhosphoSitePlus" id="Q30KQ5"/>
<dbReference type="BioMuta" id="DEFB115"/>
<dbReference type="DMDM" id="84028877"/>
<dbReference type="PaxDb" id="9606-ENSP00000383398"/>
<dbReference type="Antibodypedia" id="54286">
    <property type="antibodies" value="7 antibodies from 6 providers"/>
</dbReference>
<dbReference type="DNASU" id="245929"/>
<dbReference type="Ensembl" id="ENST00000400552.1">
    <property type="protein sequence ID" value="ENSP00000383398.1"/>
    <property type="gene ID" value="ENSG00000215547.1"/>
</dbReference>
<dbReference type="GeneID" id="245929"/>
<dbReference type="KEGG" id="hsa:245929"/>
<dbReference type="MANE-Select" id="ENST00000400552.1">
    <property type="protein sequence ID" value="ENSP00000383398.1"/>
    <property type="RefSeq nucleotide sequence ID" value="NM_001037730.1"/>
    <property type="RefSeq protein sequence ID" value="NP_001032819.1"/>
</dbReference>
<dbReference type="UCSC" id="uc002wvp.1">
    <property type="organism name" value="human"/>
</dbReference>
<dbReference type="AGR" id="HGNC:18096"/>
<dbReference type="CTD" id="245929"/>
<dbReference type="GeneCards" id="DEFB115"/>
<dbReference type="HGNC" id="HGNC:18096">
    <property type="gene designation" value="DEFB115"/>
</dbReference>
<dbReference type="HPA" id="ENSG00000215547">
    <property type="expression patterns" value="Tissue enriched (epididymis)"/>
</dbReference>
<dbReference type="neXtProt" id="NX_Q30KQ5"/>
<dbReference type="PharmGKB" id="PA38492"/>
<dbReference type="VEuPathDB" id="HostDB:ENSG00000215547"/>
<dbReference type="eggNOG" id="ENOG502TD4T">
    <property type="taxonomic scope" value="Eukaryota"/>
</dbReference>
<dbReference type="GeneTree" id="ENSGT00400000023200"/>
<dbReference type="HOGENOM" id="CLU_181906_1_1_1"/>
<dbReference type="InParanoid" id="Q30KQ5"/>
<dbReference type="OMA" id="CRNNERE"/>
<dbReference type="OrthoDB" id="9530883at2759"/>
<dbReference type="PAN-GO" id="Q30KQ5">
    <property type="GO annotations" value="0 GO annotations based on evolutionary models"/>
</dbReference>
<dbReference type="PhylomeDB" id="Q30KQ5"/>
<dbReference type="PathwayCommons" id="Q30KQ5"/>
<dbReference type="Reactome" id="R-HSA-1461957">
    <property type="pathway name" value="Beta defensins"/>
</dbReference>
<dbReference type="Reactome" id="R-HSA-1461973">
    <property type="pathway name" value="Defensins"/>
</dbReference>
<dbReference type="SignaLink" id="Q30KQ5"/>
<dbReference type="BioGRID-ORCS" id="245929">
    <property type="hits" value="12 hits in 1105 CRISPR screens"/>
</dbReference>
<dbReference type="GenomeRNAi" id="245929"/>
<dbReference type="Pharos" id="Q30KQ5">
    <property type="development level" value="Tdark"/>
</dbReference>
<dbReference type="PRO" id="PR:Q30KQ5"/>
<dbReference type="Proteomes" id="UP000005640">
    <property type="component" value="Chromosome 20"/>
</dbReference>
<dbReference type="RNAct" id="Q30KQ5">
    <property type="molecule type" value="protein"/>
</dbReference>
<dbReference type="Bgee" id="ENSG00000215547">
    <property type="expression patterns" value="Expressed in cell and 29 other cell types or tissues"/>
</dbReference>
<dbReference type="GO" id="GO:0005576">
    <property type="term" value="C:extracellular region"/>
    <property type="evidence" value="ECO:0007669"/>
    <property type="project" value="UniProtKB-SubCell"/>
</dbReference>
<dbReference type="GO" id="GO:0050829">
    <property type="term" value="P:defense response to Gram-negative bacterium"/>
    <property type="evidence" value="ECO:0007669"/>
    <property type="project" value="UniProtKB-ARBA"/>
</dbReference>
<dbReference type="GO" id="GO:0045087">
    <property type="term" value="P:innate immune response"/>
    <property type="evidence" value="ECO:0007669"/>
    <property type="project" value="InterPro"/>
</dbReference>
<dbReference type="InterPro" id="IPR050544">
    <property type="entry name" value="Beta-defensin"/>
</dbReference>
<dbReference type="InterPro" id="IPR025933">
    <property type="entry name" value="Beta_defensin_dom"/>
</dbReference>
<dbReference type="PANTHER" id="PTHR15001:SF9">
    <property type="entry name" value="BETA-DEFENSIN 115"/>
    <property type="match status" value="1"/>
</dbReference>
<dbReference type="PANTHER" id="PTHR15001">
    <property type="entry name" value="BETA-DEFENSIN 123-RELATED"/>
    <property type="match status" value="1"/>
</dbReference>
<dbReference type="Pfam" id="PF13841">
    <property type="entry name" value="Defensin_beta_2"/>
    <property type="match status" value="1"/>
</dbReference>
<reference key="1">
    <citation type="journal article" date="2005" name="Physiol. Genomics">
        <title>Cross-species analysis of the mammalian beta-defensin gene family: presence of syntenic gene clusters and preferential expression in the male reproductive tract.</title>
        <authorList>
            <person name="Patil A.A."/>
            <person name="Cai Y."/>
            <person name="Sang Y."/>
            <person name="Blecha F."/>
            <person name="Zhang G."/>
        </authorList>
    </citation>
    <scope>NUCLEOTIDE SEQUENCE [MRNA]</scope>
</reference>
<reference key="2">
    <citation type="journal article" date="2001" name="Nature">
        <title>The DNA sequence and comparative analysis of human chromosome 20.</title>
        <authorList>
            <person name="Deloukas P."/>
            <person name="Matthews L.H."/>
            <person name="Ashurst J.L."/>
            <person name="Burton J."/>
            <person name="Gilbert J.G.R."/>
            <person name="Jones M."/>
            <person name="Stavrides G."/>
            <person name="Almeida J.P."/>
            <person name="Babbage A.K."/>
            <person name="Bagguley C.L."/>
            <person name="Bailey J."/>
            <person name="Barlow K.F."/>
            <person name="Bates K.N."/>
            <person name="Beard L.M."/>
            <person name="Beare D.M."/>
            <person name="Beasley O.P."/>
            <person name="Bird C.P."/>
            <person name="Blakey S.E."/>
            <person name="Bridgeman A.M."/>
            <person name="Brown A.J."/>
            <person name="Buck D."/>
            <person name="Burrill W.D."/>
            <person name="Butler A.P."/>
            <person name="Carder C."/>
            <person name="Carter N.P."/>
            <person name="Chapman J.C."/>
            <person name="Clamp M."/>
            <person name="Clark G."/>
            <person name="Clark L.N."/>
            <person name="Clark S.Y."/>
            <person name="Clee C.M."/>
            <person name="Clegg S."/>
            <person name="Cobley V.E."/>
            <person name="Collier R.E."/>
            <person name="Connor R.E."/>
            <person name="Corby N.R."/>
            <person name="Coulson A."/>
            <person name="Coville G.J."/>
            <person name="Deadman R."/>
            <person name="Dhami P.D."/>
            <person name="Dunn M."/>
            <person name="Ellington A.G."/>
            <person name="Frankland J.A."/>
            <person name="Fraser A."/>
            <person name="French L."/>
            <person name="Garner P."/>
            <person name="Grafham D.V."/>
            <person name="Griffiths C."/>
            <person name="Griffiths M.N.D."/>
            <person name="Gwilliam R."/>
            <person name="Hall R.E."/>
            <person name="Hammond S."/>
            <person name="Harley J.L."/>
            <person name="Heath P.D."/>
            <person name="Ho S."/>
            <person name="Holden J.L."/>
            <person name="Howden P.J."/>
            <person name="Huckle E."/>
            <person name="Hunt A.R."/>
            <person name="Hunt S.E."/>
            <person name="Jekosch K."/>
            <person name="Johnson C.M."/>
            <person name="Johnson D."/>
            <person name="Kay M.P."/>
            <person name="Kimberley A.M."/>
            <person name="King A."/>
            <person name="Knights A."/>
            <person name="Laird G.K."/>
            <person name="Lawlor S."/>
            <person name="Lehvaeslaiho M.H."/>
            <person name="Leversha M.A."/>
            <person name="Lloyd C."/>
            <person name="Lloyd D.M."/>
            <person name="Lovell J.D."/>
            <person name="Marsh V.L."/>
            <person name="Martin S.L."/>
            <person name="McConnachie L.J."/>
            <person name="McLay K."/>
            <person name="McMurray A.A."/>
            <person name="Milne S.A."/>
            <person name="Mistry D."/>
            <person name="Moore M.J.F."/>
            <person name="Mullikin J.C."/>
            <person name="Nickerson T."/>
            <person name="Oliver K."/>
            <person name="Parker A."/>
            <person name="Patel R."/>
            <person name="Pearce T.A.V."/>
            <person name="Peck A.I."/>
            <person name="Phillimore B.J.C.T."/>
            <person name="Prathalingam S.R."/>
            <person name="Plumb R.W."/>
            <person name="Ramsay H."/>
            <person name="Rice C.M."/>
            <person name="Ross M.T."/>
            <person name="Scott C.E."/>
            <person name="Sehra H.K."/>
            <person name="Shownkeen R."/>
            <person name="Sims S."/>
            <person name="Skuce C.D."/>
            <person name="Smith M.L."/>
            <person name="Soderlund C."/>
            <person name="Steward C.A."/>
            <person name="Sulston J.E."/>
            <person name="Swann R.M."/>
            <person name="Sycamore N."/>
            <person name="Taylor R."/>
            <person name="Tee L."/>
            <person name="Thomas D.W."/>
            <person name="Thorpe A."/>
            <person name="Tracey A."/>
            <person name="Tromans A.C."/>
            <person name="Vaudin M."/>
            <person name="Wall M."/>
            <person name="Wallis J.M."/>
            <person name="Whitehead S.L."/>
            <person name="Whittaker P."/>
            <person name="Willey D.L."/>
            <person name="Williams L."/>
            <person name="Williams S.A."/>
            <person name="Wilming L."/>
            <person name="Wray P.W."/>
            <person name="Hubbard T."/>
            <person name="Durbin R.M."/>
            <person name="Bentley D.R."/>
            <person name="Beck S."/>
            <person name="Rogers J."/>
        </authorList>
    </citation>
    <scope>NUCLEOTIDE SEQUENCE [LARGE SCALE GENOMIC DNA]</scope>
</reference>